<comment type="catalytic activity">
    <reaction evidence="1">
        <text>L-histidine = trans-urocanate + NH4(+)</text>
        <dbReference type="Rhea" id="RHEA:21232"/>
        <dbReference type="ChEBI" id="CHEBI:17771"/>
        <dbReference type="ChEBI" id="CHEBI:28938"/>
        <dbReference type="ChEBI" id="CHEBI:57595"/>
        <dbReference type="EC" id="4.3.1.3"/>
    </reaction>
</comment>
<comment type="pathway">
    <text evidence="1">Amino-acid degradation; L-histidine degradation into L-glutamate; N-formimidoyl-L-glutamate from L-histidine: step 1/3.</text>
</comment>
<comment type="subcellular location">
    <subcellularLocation>
        <location evidence="1">Cytoplasm</location>
    </subcellularLocation>
</comment>
<comment type="PTM">
    <text evidence="1">Contains an active site 4-methylidene-imidazol-5-one (MIO), which is formed autocatalytically by cyclization and dehydration of residues Ala-Ser-Gly.</text>
</comment>
<comment type="similarity">
    <text evidence="1">Belongs to the PAL/histidase family.</text>
</comment>
<comment type="sequence caution" evidence="2">
    <conflict type="erroneous initiation">
        <sequence resource="EMBL-CDS" id="AAG19580"/>
    </conflict>
</comment>
<evidence type="ECO:0000255" key="1">
    <source>
        <dbReference type="HAMAP-Rule" id="MF_00229"/>
    </source>
</evidence>
<evidence type="ECO:0000305" key="2"/>
<protein>
    <recommendedName>
        <fullName evidence="1">Probable histidine ammonia-lyase</fullName>
        <shortName evidence="1">Histidase</shortName>
        <ecNumber evidence="1">4.3.1.3</ecNumber>
    </recommendedName>
</protein>
<proteinExistence type="inferred from homology"/>
<gene>
    <name evidence="1" type="primary">hutH</name>
    <name type="ordered locus">VNG_1212G</name>
</gene>
<keyword id="KW-0963">Cytoplasm</keyword>
<keyword id="KW-0369">Histidine metabolism</keyword>
<keyword id="KW-0456">Lyase</keyword>
<keyword id="KW-1185">Reference proteome</keyword>
<dbReference type="EC" id="4.3.1.3" evidence="1"/>
<dbReference type="EMBL" id="AE004437">
    <property type="protein sequence ID" value="AAG19580.1"/>
    <property type="status" value="ALT_INIT"/>
    <property type="molecule type" value="Genomic_DNA"/>
</dbReference>
<dbReference type="PIR" id="H84276">
    <property type="entry name" value="H84276"/>
</dbReference>
<dbReference type="RefSeq" id="WP_012289292.1">
    <property type="nucleotide sequence ID" value="NC_002607.1"/>
</dbReference>
<dbReference type="SMR" id="Q9HQD5"/>
<dbReference type="STRING" id="64091.VNG_1212G"/>
<dbReference type="PaxDb" id="64091-VNG_1212G"/>
<dbReference type="GeneID" id="68693978"/>
<dbReference type="KEGG" id="hal:VNG_1212G"/>
<dbReference type="PATRIC" id="fig|64091.14.peg.929"/>
<dbReference type="HOGENOM" id="CLU_014801_4_1_2"/>
<dbReference type="InParanoid" id="Q9HQD5"/>
<dbReference type="OrthoDB" id="27422at2157"/>
<dbReference type="PhylomeDB" id="Q9HQD5"/>
<dbReference type="UniPathway" id="UPA00379">
    <property type="reaction ID" value="UER00549"/>
</dbReference>
<dbReference type="Proteomes" id="UP000000554">
    <property type="component" value="Chromosome"/>
</dbReference>
<dbReference type="GO" id="GO:0005737">
    <property type="term" value="C:cytoplasm"/>
    <property type="evidence" value="ECO:0007669"/>
    <property type="project" value="UniProtKB-SubCell"/>
</dbReference>
<dbReference type="GO" id="GO:0016841">
    <property type="term" value="F:ammonia-lyase activity"/>
    <property type="evidence" value="ECO:0000318"/>
    <property type="project" value="GO_Central"/>
</dbReference>
<dbReference type="GO" id="GO:0004397">
    <property type="term" value="F:histidine ammonia-lyase activity"/>
    <property type="evidence" value="ECO:0007669"/>
    <property type="project" value="UniProtKB-UniRule"/>
</dbReference>
<dbReference type="GO" id="GO:0019556">
    <property type="term" value="P:L-histidine catabolic process to glutamate and formamide"/>
    <property type="evidence" value="ECO:0007669"/>
    <property type="project" value="UniProtKB-UniPathway"/>
</dbReference>
<dbReference type="GO" id="GO:0019557">
    <property type="term" value="P:L-histidine catabolic process to glutamate and formate"/>
    <property type="evidence" value="ECO:0007669"/>
    <property type="project" value="UniProtKB-UniPathway"/>
</dbReference>
<dbReference type="CDD" id="cd00332">
    <property type="entry name" value="PAL-HAL"/>
    <property type="match status" value="1"/>
</dbReference>
<dbReference type="FunFam" id="1.10.275.10:FF:000005">
    <property type="entry name" value="Histidine ammonia-lyase"/>
    <property type="match status" value="1"/>
</dbReference>
<dbReference type="Gene3D" id="1.20.200.10">
    <property type="entry name" value="Fumarase/aspartase (Central domain)"/>
    <property type="match status" value="1"/>
</dbReference>
<dbReference type="Gene3D" id="1.10.275.10">
    <property type="entry name" value="Fumarase/aspartase (N-terminal domain)"/>
    <property type="match status" value="1"/>
</dbReference>
<dbReference type="HAMAP" id="MF_00229">
    <property type="entry name" value="His_ammonia_lyase"/>
    <property type="match status" value="1"/>
</dbReference>
<dbReference type="InterPro" id="IPR001106">
    <property type="entry name" value="Aromatic_Lyase"/>
</dbReference>
<dbReference type="InterPro" id="IPR024083">
    <property type="entry name" value="Fumarase/histidase_N"/>
</dbReference>
<dbReference type="InterPro" id="IPR005921">
    <property type="entry name" value="HutH"/>
</dbReference>
<dbReference type="InterPro" id="IPR008948">
    <property type="entry name" value="L-Aspartase-like"/>
</dbReference>
<dbReference type="InterPro" id="IPR022313">
    <property type="entry name" value="Phe/His_NH3-lyase_AS"/>
</dbReference>
<dbReference type="NCBIfam" id="TIGR01225">
    <property type="entry name" value="hutH"/>
    <property type="match status" value="1"/>
</dbReference>
<dbReference type="NCBIfam" id="NF006871">
    <property type="entry name" value="PRK09367.1"/>
    <property type="match status" value="1"/>
</dbReference>
<dbReference type="PANTHER" id="PTHR10362">
    <property type="entry name" value="HISTIDINE AMMONIA-LYASE"/>
    <property type="match status" value="1"/>
</dbReference>
<dbReference type="Pfam" id="PF00221">
    <property type="entry name" value="Lyase_aromatic"/>
    <property type="match status" value="1"/>
</dbReference>
<dbReference type="SUPFAM" id="SSF48557">
    <property type="entry name" value="L-aspartase-like"/>
    <property type="match status" value="1"/>
</dbReference>
<dbReference type="PROSITE" id="PS00488">
    <property type="entry name" value="PAL_HISTIDASE"/>
    <property type="match status" value="1"/>
</dbReference>
<name>HUTH_HALSA</name>
<sequence>MTTEGVVIDGESLTPAAVDAVARHDAPVSIAAGAREAVRESRARIADVLGGDEAVYGVNTGFGSMSDTRIDAADREALQANLVRSHAAGAGSELDTAAVRALLVTRLNALAKGYSGIRERVLDVLVGLLNEGVHPVVPSRGSLGASGDLAPLAHMSRVLIGEGQADVAGERMPAAEALAAADLEPVTLQAKEGLALINGTQLTTGVAALALVDAERVLRSADTAGALTTEVTMSTTASCAPAIHEVRPHDGQAVSARHIRNLTAGSEVLDHHRDCDRVQDAYSIRCLPQVHGAVRDALDHLRAAVATELNSATDNPLVFAGDRVGPRASGTDRAAVVSGGNFHGEVLALRLGYAASALAELAAISERRTDRLLNPETQEPHLEPFLAPDSGLHSGLMIPQYTAASLVNDLRSLGQPTLDNASVSGAQEDHVSMSAGAAYNFREAVEKAATVVGVELLCGAQGREFLDPDLALGAGTAAAYDLVREVSEPVAGDRALADDMAAVGDLVRAGLVEDAVARALDAPLA</sequence>
<feature type="chain" id="PRO_0000161055" description="Probable histidine ammonia-lyase">
    <location>
        <begin position="1"/>
        <end position="525"/>
    </location>
</feature>
<feature type="modified residue" description="2,3-didehydroalanine (Ser)" evidence="1">
    <location>
        <position position="146"/>
    </location>
</feature>
<feature type="cross-link" description="5-imidazolinone (Ala-Gly)" evidence="1">
    <location>
        <begin position="145"/>
        <end position="147"/>
    </location>
</feature>
<reference key="1">
    <citation type="journal article" date="2000" name="Proc. Natl. Acad. Sci. U.S.A.">
        <title>Genome sequence of Halobacterium species NRC-1.</title>
        <authorList>
            <person name="Ng W.V."/>
            <person name="Kennedy S.P."/>
            <person name="Mahairas G.G."/>
            <person name="Berquist B."/>
            <person name="Pan M."/>
            <person name="Shukla H.D."/>
            <person name="Lasky S.R."/>
            <person name="Baliga N.S."/>
            <person name="Thorsson V."/>
            <person name="Sbrogna J."/>
            <person name="Swartzell S."/>
            <person name="Weir D."/>
            <person name="Hall J."/>
            <person name="Dahl T.A."/>
            <person name="Welti R."/>
            <person name="Goo Y.A."/>
            <person name="Leithauser B."/>
            <person name="Keller K."/>
            <person name="Cruz R."/>
            <person name="Danson M.J."/>
            <person name="Hough D.W."/>
            <person name="Maddocks D.G."/>
            <person name="Jablonski P.E."/>
            <person name="Krebs M.P."/>
            <person name="Angevine C.M."/>
            <person name="Dale H."/>
            <person name="Isenbarger T.A."/>
            <person name="Peck R.F."/>
            <person name="Pohlschroder M."/>
            <person name="Spudich J.L."/>
            <person name="Jung K.-H."/>
            <person name="Alam M."/>
            <person name="Freitas T."/>
            <person name="Hou S."/>
            <person name="Daniels C.J."/>
            <person name="Dennis P.P."/>
            <person name="Omer A.D."/>
            <person name="Ebhardt H."/>
            <person name="Lowe T.M."/>
            <person name="Liang P."/>
            <person name="Riley M."/>
            <person name="Hood L."/>
            <person name="DasSarma S."/>
        </authorList>
    </citation>
    <scope>NUCLEOTIDE SEQUENCE [LARGE SCALE GENOMIC DNA]</scope>
    <source>
        <strain>ATCC 700922 / JCM 11081 / NRC-1</strain>
    </source>
</reference>
<organism>
    <name type="scientific">Halobacterium salinarum (strain ATCC 700922 / JCM 11081 / NRC-1)</name>
    <name type="common">Halobacterium halobium</name>
    <dbReference type="NCBI Taxonomy" id="64091"/>
    <lineage>
        <taxon>Archaea</taxon>
        <taxon>Methanobacteriati</taxon>
        <taxon>Methanobacteriota</taxon>
        <taxon>Stenosarchaea group</taxon>
        <taxon>Halobacteria</taxon>
        <taxon>Halobacteriales</taxon>
        <taxon>Halobacteriaceae</taxon>
        <taxon>Halobacterium</taxon>
        <taxon>Halobacterium salinarum NRC-34001</taxon>
    </lineage>
</organism>
<accession>Q9HQD5</accession>